<protein>
    <recommendedName>
        <fullName evidence="1">UPF0316 protein SAS1835</fullName>
    </recommendedName>
</protein>
<keyword id="KW-1003">Cell membrane</keyword>
<keyword id="KW-0472">Membrane</keyword>
<keyword id="KW-0812">Transmembrane</keyword>
<keyword id="KW-1133">Transmembrane helix</keyword>
<accession>Q6G821</accession>
<organism>
    <name type="scientific">Staphylococcus aureus (strain MSSA476)</name>
    <dbReference type="NCBI Taxonomy" id="282459"/>
    <lineage>
        <taxon>Bacteria</taxon>
        <taxon>Bacillati</taxon>
        <taxon>Bacillota</taxon>
        <taxon>Bacilli</taxon>
        <taxon>Bacillales</taxon>
        <taxon>Staphylococcaceae</taxon>
        <taxon>Staphylococcus</taxon>
    </lineage>
</organism>
<name>Y1835_STAAS</name>
<gene>
    <name type="ordered locus">SAS1835</name>
</gene>
<feature type="chain" id="PRO_0000171954" description="UPF0316 protein SAS1835">
    <location>
        <begin position="1"/>
        <end position="200"/>
    </location>
</feature>
<feature type="transmembrane region" description="Helical" evidence="1">
    <location>
        <begin position="8"/>
        <end position="28"/>
    </location>
</feature>
<feature type="transmembrane region" description="Helical" evidence="1">
    <location>
        <begin position="40"/>
        <end position="60"/>
    </location>
</feature>
<feature type="transmembrane region" description="Helical" evidence="1">
    <location>
        <begin position="66"/>
        <end position="86"/>
    </location>
</feature>
<dbReference type="EMBL" id="BX571857">
    <property type="protein sequence ID" value="CAG43640.1"/>
    <property type="molecule type" value="Genomic_DNA"/>
</dbReference>
<dbReference type="RefSeq" id="WP_000011542.1">
    <property type="nucleotide sequence ID" value="NC_002953.3"/>
</dbReference>
<dbReference type="SMR" id="Q6G821"/>
<dbReference type="KEGG" id="sas:SAS1835"/>
<dbReference type="HOGENOM" id="CLU_106166_1_0_9"/>
<dbReference type="GO" id="GO:0005886">
    <property type="term" value="C:plasma membrane"/>
    <property type="evidence" value="ECO:0007669"/>
    <property type="project" value="UniProtKB-SubCell"/>
</dbReference>
<dbReference type="CDD" id="cd16381">
    <property type="entry name" value="YitT_C_like_1"/>
    <property type="match status" value="1"/>
</dbReference>
<dbReference type="HAMAP" id="MF_01515">
    <property type="entry name" value="UPF0316"/>
    <property type="match status" value="1"/>
</dbReference>
<dbReference type="InterPro" id="IPR019264">
    <property type="entry name" value="DUF2179"/>
</dbReference>
<dbReference type="InterPro" id="IPR044035">
    <property type="entry name" value="DUF5698"/>
</dbReference>
<dbReference type="InterPro" id="IPR022930">
    <property type="entry name" value="UPF0316"/>
</dbReference>
<dbReference type="NCBIfam" id="NF003190">
    <property type="entry name" value="PRK04164.1-1"/>
    <property type="match status" value="1"/>
</dbReference>
<dbReference type="NCBIfam" id="NF003194">
    <property type="entry name" value="PRK04164.1-5"/>
    <property type="match status" value="1"/>
</dbReference>
<dbReference type="PANTHER" id="PTHR40060">
    <property type="entry name" value="UPF0316 PROTEIN YEBE"/>
    <property type="match status" value="1"/>
</dbReference>
<dbReference type="PANTHER" id="PTHR40060:SF1">
    <property type="entry name" value="UPF0316 PROTEIN YEBE"/>
    <property type="match status" value="1"/>
</dbReference>
<dbReference type="Pfam" id="PF10035">
    <property type="entry name" value="DUF2179"/>
    <property type="match status" value="1"/>
</dbReference>
<dbReference type="Pfam" id="PF18955">
    <property type="entry name" value="DUF5698"/>
    <property type="match status" value="1"/>
</dbReference>
<proteinExistence type="inferred from homology"/>
<evidence type="ECO:0000255" key="1">
    <source>
        <dbReference type="HAMAP-Rule" id="MF_01515"/>
    </source>
</evidence>
<reference key="1">
    <citation type="journal article" date="2004" name="Proc. Natl. Acad. Sci. U.S.A.">
        <title>Complete genomes of two clinical Staphylococcus aureus strains: evidence for the rapid evolution of virulence and drug resistance.</title>
        <authorList>
            <person name="Holden M.T.G."/>
            <person name="Feil E.J."/>
            <person name="Lindsay J.A."/>
            <person name="Peacock S.J."/>
            <person name="Day N.P.J."/>
            <person name="Enright M.C."/>
            <person name="Foster T.J."/>
            <person name="Moore C.E."/>
            <person name="Hurst L."/>
            <person name="Atkin R."/>
            <person name="Barron A."/>
            <person name="Bason N."/>
            <person name="Bentley S.D."/>
            <person name="Chillingworth C."/>
            <person name="Chillingworth T."/>
            <person name="Churcher C."/>
            <person name="Clark L."/>
            <person name="Corton C."/>
            <person name="Cronin A."/>
            <person name="Doggett J."/>
            <person name="Dowd L."/>
            <person name="Feltwell T."/>
            <person name="Hance Z."/>
            <person name="Harris B."/>
            <person name="Hauser H."/>
            <person name="Holroyd S."/>
            <person name="Jagels K."/>
            <person name="James K.D."/>
            <person name="Lennard N."/>
            <person name="Line A."/>
            <person name="Mayes R."/>
            <person name="Moule S."/>
            <person name="Mungall K."/>
            <person name="Ormond D."/>
            <person name="Quail M.A."/>
            <person name="Rabbinowitsch E."/>
            <person name="Rutherford K.M."/>
            <person name="Sanders M."/>
            <person name="Sharp S."/>
            <person name="Simmonds M."/>
            <person name="Stevens K."/>
            <person name="Whitehead S."/>
            <person name="Barrell B.G."/>
            <person name="Spratt B.G."/>
            <person name="Parkhill J."/>
        </authorList>
    </citation>
    <scope>NUCLEOTIDE SEQUENCE [LARGE SCALE GENOMIC DNA]</scope>
    <source>
        <strain>MSSA476</strain>
    </source>
</reference>
<sequence length="200" mass="22955">MSFVTENPWLMVLTIFIINVCYVTFLTMRTILTLKGYRYIAASVSFLEVLVYIVGLGLVMSNLDHIQNIIAYAFGFSIGIIVGMKIEEKLALGYTVVNVTSAEYELDLPNELRNLGYGVTHYAAFGRDGSRMVMQILTPRKYERKLMDTIKNLDPKAFIIAYEPRNIHGGFWTKGIRRRKLKDYEPEELESVVEHEIQSK</sequence>
<comment type="subcellular location">
    <subcellularLocation>
        <location evidence="1">Cell membrane</location>
        <topology evidence="1">Multi-pass membrane protein</topology>
    </subcellularLocation>
</comment>
<comment type="similarity">
    <text evidence="1">Belongs to the UPF0316 family.</text>
</comment>